<protein>
    <recommendedName>
        <fullName evidence="1">Diaminopimelate epimerase</fullName>
        <shortName evidence="1">DAP epimerase</shortName>
        <ecNumber evidence="1">5.1.1.7</ecNumber>
    </recommendedName>
    <alternativeName>
        <fullName evidence="1">PLP-independent amino acid racemase</fullName>
    </alternativeName>
</protein>
<accession>A4YKA5</accession>
<name>DAPF_BRASO</name>
<keyword id="KW-0028">Amino-acid biosynthesis</keyword>
<keyword id="KW-0963">Cytoplasm</keyword>
<keyword id="KW-0413">Isomerase</keyword>
<keyword id="KW-0457">Lysine biosynthesis</keyword>
<keyword id="KW-1185">Reference proteome</keyword>
<feature type="chain" id="PRO_1000011849" description="Diaminopimelate epimerase">
    <location>
        <begin position="1"/>
        <end position="289"/>
    </location>
</feature>
<feature type="active site" description="Proton donor" evidence="1">
    <location>
        <position position="76"/>
    </location>
</feature>
<feature type="active site" description="Proton acceptor" evidence="1">
    <location>
        <position position="225"/>
    </location>
</feature>
<feature type="binding site" evidence="1">
    <location>
        <position position="17"/>
    </location>
    <ligand>
        <name>substrate</name>
    </ligand>
</feature>
<feature type="binding site" evidence="1">
    <location>
        <position position="47"/>
    </location>
    <ligand>
        <name>substrate</name>
    </ligand>
</feature>
<feature type="binding site" evidence="1">
    <location>
        <position position="67"/>
    </location>
    <ligand>
        <name>substrate</name>
    </ligand>
</feature>
<feature type="binding site" evidence="1">
    <location>
        <begin position="77"/>
        <end position="78"/>
    </location>
    <ligand>
        <name>substrate</name>
    </ligand>
</feature>
<feature type="binding site" evidence="1">
    <location>
        <position position="164"/>
    </location>
    <ligand>
        <name>substrate</name>
    </ligand>
</feature>
<feature type="binding site" evidence="1">
    <location>
        <position position="198"/>
    </location>
    <ligand>
        <name>substrate</name>
    </ligand>
</feature>
<feature type="binding site" evidence="1">
    <location>
        <begin position="216"/>
        <end position="217"/>
    </location>
    <ligand>
        <name>substrate</name>
    </ligand>
</feature>
<feature type="binding site" evidence="1">
    <location>
        <begin position="226"/>
        <end position="227"/>
    </location>
    <ligand>
        <name>substrate</name>
    </ligand>
</feature>
<feature type="site" description="Could be important to modulate the pK values of the two catalytic cysteine residues" evidence="1">
    <location>
        <position position="166"/>
    </location>
</feature>
<feature type="site" description="Could be important to modulate the pK values of the two catalytic cysteine residues" evidence="1">
    <location>
        <position position="216"/>
    </location>
</feature>
<reference key="1">
    <citation type="journal article" date="2007" name="Science">
        <title>Legumes symbioses: absence of nod genes in photosynthetic bradyrhizobia.</title>
        <authorList>
            <person name="Giraud E."/>
            <person name="Moulin L."/>
            <person name="Vallenet D."/>
            <person name="Barbe V."/>
            <person name="Cytryn E."/>
            <person name="Avarre J.-C."/>
            <person name="Jaubert M."/>
            <person name="Simon D."/>
            <person name="Cartieaux F."/>
            <person name="Prin Y."/>
            <person name="Bena G."/>
            <person name="Hannibal L."/>
            <person name="Fardoux J."/>
            <person name="Kojadinovic M."/>
            <person name="Vuillet L."/>
            <person name="Lajus A."/>
            <person name="Cruveiller S."/>
            <person name="Rouy Z."/>
            <person name="Mangenot S."/>
            <person name="Segurens B."/>
            <person name="Dossat C."/>
            <person name="Franck W.L."/>
            <person name="Chang W.-S."/>
            <person name="Saunders E."/>
            <person name="Bruce D."/>
            <person name="Richardson P."/>
            <person name="Normand P."/>
            <person name="Dreyfus B."/>
            <person name="Pignol D."/>
            <person name="Stacey G."/>
            <person name="Emerich D."/>
            <person name="Vermeglio A."/>
            <person name="Medigue C."/>
            <person name="Sadowsky M."/>
        </authorList>
    </citation>
    <scope>NUCLEOTIDE SEQUENCE [LARGE SCALE GENOMIC DNA]</scope>
    <source>
        <strain>ORS 278</strain>
    </source>
</reference>
<dbReference type="EC" id="5.1.1.7" evidence="1"/>
<dbReference type="EMBL" id="CU234118">
    <property type="protein sequence ID" value="CAL74331.1"/>
    <property type="molecule type" value="Genomic_DNA"/>
</dbReference>
<dbReference type="RefSeq" id="WP_011923612.1">
    <property type="nucleotide sequence ID" value="NC_009445.1"/>
</dbReference>
<dbReference type="SMR" id="A4YKA5"/>
<dbReference type="STRING" id="114615.BRADO0383"/>
<dbReference type="KEGG" id="bra:BRADO0383"/>
<dbReference type="eggNOG" id="COG0253">
    <property type="taxonomic scope" value="Bacteria"/>
</dbReference>
<dbReference type="HOGENOM" id="CLU_053306_1_0_5"/>
<dbReference type="OrthoDB" id="9805408at2"/>
<dbReference type="UniPathway" id="UPA00034">
    <property type="reaction ID" value="UER00025"/>
</dbReference>
<dbReference type="Proteomes" id="UP000001994">
    <property type="component" value="Chromosome"/>
</dbReference>
<dbReference type="GO" id="GO:0005829">
    <property type="term" value="C:cytosol"/>
    <property type="evidence" value="ECO:0007669"/>
    <property type="project" value="TreeGrafter"/>
</dbReference>
<dbReference type="GO" id="GO:0008837">
    <property type="term" value="F:diaminopimelate epimerase activity"/>
    <property type="evidence" value="ECO:0007669"/>
    <property type="project" value="UniProtKB-UniRule"/>
</dbReference>
<dbReference type="GO" id="GO:0009089">
    <property type="term" value="P:lysine biosynthetic process via diaminopimelate"/>
    <property type="evidence" value="ECO:0007669"/>
    <property type="project" value="UniProtKB-UniRule"/>
</dbReference>
<dbReference type="FunFam" id="3.10.310.10:FF:000004">
    <property type="entry name" value="Diaminopimelate epimerase"/>
    <property type="match status" value="1"/>
</dbReference>
<dbReference type="Gene3D" id="3.10.310.10">
    <property type="entry name" value="Diaminopimelate Epimerase, Chain A, domain 1"/>
    <property type="match status" value="2"/>
</dbReference>
<dbReference type="HAMAP" id="MF_00197">
    <property type="entry name" value="DAP_epimerase"/>
    <property type="match status" value="1"/>
</dbReference>
<dbReference type="InterPro" id="IPR018510">
    <property type="entry name" value="DAP_epimerase_AS"/>
</dbReference>
<dbReference type="InterPro" id="IPR001653">
    <property type="entry name" value="DAP_epimerase_DapF"/>
</dbReference>
<dbReference type="NCBIfam" id="TIGR00652">
    <property type="entry name" value="DapF"/>
    <property type="match status" value="1"/>
</dbReference>
<dbReference type="PANTHER" id="PTHR31689:SF0">
    <property type="entry name" value="DIAMINOPIMELATE EPIMERASE"/>
    <property type="match status" value="1"/>
</dbReference>
<dbReference type="PANTHER" id="PTHR31689">
    <property type="entry name" value="DIAMINOPIMELATE EPIMERASE, CHLOROPLASTIC"/>
    <property type="match status" value="1"/>
</dbReference>
<dbReference type="Pfam" id="PF01678">
    <property type="entry name" value="DAP_epimerase"/>
    <property type="match status" value="2"/>
</dbReference>
<dbReference type="SUPFAM" id="SSF54506">
    <property type="entry name" value="Diaminopimelate epimerase-like"/>
    <property type="match status" value="2"/>
</dbReference>
<dbReference type="PROSITE" id="PS01326">
    <property type="entry name" value="DAP_EPIMERASE"/>
    <property type="match status" value="1"/>
</dbReference>
<comment type="function">
    <text evidence="1">Catalyzes the stereoinversion of LL-2,6-diaminopimelate (L,L-DAP) to meso-diaminopimelate (meso-DAP), a precursor of L-lysine and an essential component of the bacterial peptidoglycan.</text>
</comment>
<comment type="catalytic activity">
    <reaction evidence="1">
        <text>(2S,6S)-2,6-diaminopimelate = meso-2,6-diaminopimelate</text>
        <dbReference type="Rhea" id="RHEA:15393"/>
        <dbReference type="ChEBI" id="CHEBI:57609"/>
        <dbReference type="ChEBI" id="CHEBI:57791"/>
        <dbReference type="EC" id="5.1.1.7"/>
    </reaction>
</comment>
<comment type="pathway">
    <text evidence="1">Amino-acid biosynthesis; L-lysine biosynthesis via DAP pathway; DL-2,6-diaminopimelate from LL-2,6-diaminopimelate: step 1/1.</text>
</comment>
<comment type="subunit">
    <text evidence="1">Homodimer.</text>
</comment>
<comment type="subcellular location">
    <subcellularLocation>
        <location evidence="1">Cytoplasm</location>
    </subcellularLocation>
</comment>
<comment type="similarity">
    <text evidence="1">Belongs to the diaminopimelate epimerase family.</text>
</comment>
<sequence>MSPLANHSFVKMNGIGNEIVVLDLRDVKHVVTPDEARAVASRVPYDQMMVLQRPRFDGTEAFIRIYNNDGSESGACGNGMRCVVSQVFGKTGQTSATFETRAGLLNCWQGPAPDLYTVDMGVPRFGWQDIPLAEEFRDTRYIELQIGPIDAPILHSPSVVSMGNPHAVFWVDNDVNSYDLERFGPLLENHPIFPERANITLAQIVDRDHITMRTWERGAGLTRACGSAACATAVAAARLKRANRLVHMTLPGGELTIEWRERDDHVLMTGTATFEFEGRFEPALFASVA</sequence>
<gene>
    <name evidence="1" type="primary">dapF</name>
    <name type="ordered locus">BRADO0383</name>
</gene>
<proteinExistence type="inferred from homology"/>
<evidence type="ECO:0000255" key="1">
    <source>
        <dbReference type="HAMAP-Rule" id="MF_00197"/>
    </source>
</evidence>
<organism>
    <name type="scientific">Bradyrhizobium sp. (strain ORS 278)</name>
    <dbReference type="NCBI Taxonomy" id="114615"/>
    <lineage>
        <taxon>Bacteria</taxon>
        <taxon>Pseudomonadati</taxon>
        <taxon>Pseudomonadota</taxon>
        <taxon>Alphaproteobacteria</taxon>
        <taxon>Hyphomicrobiales</taxon>
        <taxon>Nitrobacteraceae</taxon>
        <taxon>Bradyrhizobium</taxon>
    </lineage>
</organism>